<keyword id="KW-0010">Activator</keyword>
<keyword id="KW-0963">Cytoplasm</keyword>
<keyword id="KW-0238">DNA-binding</keyword>
<keyword id="KW-0276">Fatty acid metabolism</keyword>
<keyword id="KW-0443">Lipid metabolism</keyword>
<keyword id="KW-1185">Reference proteome</keyword>
<keyword id="KW-0678">Repressor</keyword>
<keyword id="KW-0804">Transcription</keyword>
<keyword id="KW-0805">Transcription regulation</keyword>
<gene>
    <name evidence="1" type="primary">fadR</name>
    <name type="ordered locus">ECA2360</name>
</gene>
<name>FADR_PECAS</name>
<dbReference type="EMBL" id="BX950851">
    <property type="protein sequence ID" value="CAG75263.1"/>
    <property type="molecule type" value="Genomic_DNA"/>
</dbReference>
<dbReference type="RefSeq" id="WP_011093917.1">
    <property type="nucleotide sequence ID" value="NC_004547.2"/>
</dbReference>
<dbReference type="SMR" id="Q6D4N0"/>
<dbReference type="STRING" id="218491.ECA2360"/>
<dbReference type="GeneID" id="57208923"/>
<dbReference type="KEGG" id="eca:ECA2360"/>
<dbReference type="PATRIC" id="fig|218491.5.peg.2385"/>
<dbReference type="eggNOG" id="COG2186">
    <property type="taxonomic scope" value="Bacteria"/>
</dbReference>
<dbReference type="HOGENOM" id="CLU_017584_9_4_6"/>
<dbReference type="OrthoDB" id="5683977at2"/>
<dbReference type="Proteomes" id="UP000007966">
    <property type="component" value="Chromosome"/>
</dbReference>
<dbReference type="GO" id="GO:0005737">
    <property type="term" value="C:cytoplasm"/>
    <property type="evidence" value="ECO:0007669"/>
    <property type="project" value="UniProtKB-SubCell"/>
</dbReference>
<dbReference type="GO" id="GO:0003677">
    <property type="term" value="F:DNA binding"/>
    <property type="evidence" value="ECO:0007669"/>
    <property type="project" value="UniProtKB-KW"/>
</dbReference>
<dbReference type="GO" id="GO:0003700">
    <property type="term" value="F:DNA-binding transcription factor activity"/>
    <property type="evidence" value="ECO:0007669"/>
    <property type="project" value="UniProtKB-UniRule"/>
</dbReference>
<dbReference type="GO" id="GO:0000062">
    <property type="term" value="F:fatty-acyl-CoA binding"/>
    <property type="evidence" value="ECO:0007669"/>
    <property type="project" value="InterPro"/>
</dbReference>
<dbReference type="GO" id="GO:0006631">
    <property type="term" value="P:fatty acid metabolic process"/>
    <property type="evidence" value="ECO:0007669"/>
    <property type="project" value="UniProtKB-KW"/>
</dbReference>
<dbReference type="GO" id="GO:0019217">
    <property type="term" value="P:regulation of fatty acid metabolic process"/>
    <property type="evidence" value="ECO:0007669"/>
    <property type="project" value="UniProtKB-UniRule"/>
</dbReference>
<dbReference type="CDD" id="cd07377">
    <property type="entry name" value="WHTH_GntR"/>
    <property type="match status" value="1"/>
</dbReference>
<dbReference type="FunFam" id="1.10.10.10:FF:000036">
    <property type="entry name" value="Fatty acid metabolism regulator protein"/>
    <property type="match status" value="1"/>
</dbReference>
<dbReference type="Gene3D" id="1.20.120.530">
    <property type="entry name" value="GntR ligand-binding domain-like"/>
    <property type="match status" value="1"/>
</dbReference>
<dbReference type="Gene3D" id="1.10.10.10">
    <property type="entry name" value="Winged helix-like DNA-binding domain superfamily/Winged helix DNA-binding domain"/>
    <property type="match status" value="1"/>
</dbReference>
<dbReference type="HAMAP" id="MF_00696">
    <property type="entry name" value="HTH_FadR"/>
    <property type="match status" value="1"/>
</dbReference>
<dbReference type="InterPro" id="IPR014178">
    <property type="entry name" value="FA-response_TF_FadR"/>
</dbReference>
<dbReference type="InterPro" id="IPR028374">
    <property type="entry name" value="FadR_C"/>
</dbReference>
<dbReference type="InterPro" id="IPR008920">
    <property type="entry name" value="TF_FadR/GntR_C"/>
</dbReference>
<dbReference type="InterPro" id="IPR000524">
    <property type="entry name" value="Tscrpt_reg_HTH_GntR"/>
</dbReference>
<dbReference type="InterPro" id="IPR036388">
    <property type="entry name" value="WH-like_DNA-bd_sf"/>
</dbReference>
<dbReference type="InterPro" id="IPR036390">
    <property type="entry name" value="WH_DNA-bd_sf"/>
</dbReference>
<dbReference type="NCBIfam" id="TIGR02812">
    <property type="entry name" value="fadR_gamma"/>
    <property type="match status" value="1"/>
</dbReference>
<dbReference type="NCBIfam" id="NF003444">
    <property type="entry name" value="PRK04984.1"/>
    <property type="match status" value="1"/>
</dbReference>
<dbReference type="PANTHER" id="PTHR43537:SF52">
    <property type="entry name" value="FATTY ACID METABOLISM REGULATOR PROTEIN"/>
    <property type="match status" value="1"/>
</dbReference>
<dbReference type="PANTHER" id="PTHR43537">
    <property type="entry name" value="TRANSCRIPTIONAL REGULATOR, GNTR FAMILY"/>
    <property type="match status" value="1"/>
</dbReference>
<dbReference type="Pfam" id="PF07840">
    <property type="entry name" value="FadR_C"/>
    <property type="match status" value="1"/>
</dbReference>
<dbReference type="Pfam" id="PF00392">
    <property type="entry name" value="GntR"/>
    <property type="match status" value="1"/>
</dbReference>
<dbReference type="PRINTS" id="PR00035">
    <property type="entry name" value="HTHGNTR"/>
</dbReference>
<dbReference type="SMART" id="SM00345">
    <property type="entry name" value="HTH_GNTR"/>
    <property type="match status" value="1"/>
</dbReference>
<dbReference type="SUPFAM" id="SSF48008">
    <property type="entry name" value="GntR ligand-binding domain-like"/>
    <property type="match status" value="1"/>
</dbReference>
<dbReference type="SUPFAM" id="SSF46785">
    <property type="entry name" value="Winged helix' DNA-binding domain"/>
    <property type="match status" value="1"/>
</dbReference>
<dbReference type="PROSITE" id="PS50949">
    <property type="entry name" value="HTH_GNTR"/>
    <property type="match status" value="1"/>
</dbReference>
<comment type="function">
    <text evidence="1">Multifunctional regulator of fatty acid metabolism.</text>
</comment>
<comment type="subunit">
    <text evidence="1">Homodimer.</text>
</comment>
<comment type="subcellular location">
    <subcellularLocation>
        <location evidence="1">Cytoplasm</location>
    </subcellularLocation>
</comment>
<protein>
    <recommendedName>
        <fullName evidence="1">Fatty acid metabolism regulator protein</fullName>
    </recommendedName>
</protein>
<sequence length="239" mass="27069">MVIKAQSPAGFAEEYIIESIWNNRFPPGSILPAERELSELIGVTRTTLREVLQRLARDGWLTIQHGKPTKINNFWETSGLNILETLARLDHDSVPQLIDNLLAVRTNIAAIFIRTALRHNPEKVRDVLTQSSAVDDSAEAFAQLDYNVFRGLAFASGNPIYGLILNGLKGLYIRVGRYYFSNPEARKLAVNFYGRLEALRSEELYDQVMDVVRHYGKESGAIWHSMQSAIPRDIAEVRR</sequence>
<organism>
    <name type="scientific">Pectobacterium atrosepticum (strain SCRI 1043 / ATCC BAA-672)</name>
    <name type="common">Erwinia carotovora subsp. atroseptica</name>
    <dbReference type="NCBI Taxonomy" id="218491"/>
    <lineage>
        <taxon>Bacteria</taxon>
        <taxon>Pseudomonadati</taxon>
        <taxon>Pseudomonadota</taxon>
        <taxon>Gammaproteobacteria</taxon>
        <taxon>Enterobacterales</taxon>
        <taxon>Pectobacteriaceae</taxon>
        <taxon>Pectobacterium</taxon>
    </lineage>
</organism>
<reference key="1">
    <citation type="journal article" date="2004" name="Proc. Natl. Acad. Sci. U.S.A.">
        <title>Genome sequence of the enterobacterial phytopathogen Erwinia carotovora subsp. atroseptica and characterization of virulence factors.</title>
        <authorList>
            <person name="Bell K.S."/>
            <person name="Sebaihia M."/>
            <person name="Pritchard L."/>
            <person name="Holden M.T.G."/>
            <person name="Hyman L.J."/>
            <person name="Holeva M.C."/>
            <person name="Thomson N.R."/>
            <person name="Bentley S.D."/>
            <person name="Churcher L.J.C."/>
            <person name="Mungall K."/>
            <person name="Atkin R."/>
            <person name="Bason N."/>
            <person name="Brooks K."/>
            <person name="Chillingworth T."/>
            <person name="Clark K."/>
            <person name="Doggett J."/>
            <person name="Fraser A."/>
            <person name="Hance Z."/>
            <person name="Hauser H."/>
            <person name="Jagels K."/>
            <person name="Moule S."/>
            <person name="Norbertczak H."/>
            <person name="Ormond D."/>
            <person name="Price C."/>
            <person name="Quail M.A."/>
            <person name="Sanders M."/>
            <person name="Walker D."/>
            <person name="Whitehead S."/>
            <person name="Salmond G.P.C."/>
            <person name="Birch P.R.J."/>
            <person name="Parkhill J."/>
            <person name="Toth I.K."/>
        </authorList>
    </citation>
    <scope>NUCLEOTIDE SEQUENCE [LARGE SCALE GENOMIC DNA]</scope>
    <source>
        <strain>SCRI 1043 / ATCC BAA-672</strain>
    </source>
</reference>
<evidence type="ECO:0000255" key="1">
    <source>
        <dbReference type="HAMAP-Rule" id="MF_00696"/>
    </source>
</evidence>
<accession>Q6D4N0</accession>
<feature type="chain" id="PRO_0000301502" description="Fatty acid metabolism regulator protein">
    <location>
        <begin position="1"/>
        <end position="239"/>
    </location>
</feature>
<feature type="domain" description="HTH gntR-type" evidence="1">
    <location>
        <begin position="6"/>
        <end position="74"/>
    </location>
</feature>
<feature type="DNA-binding region" description="H-T-H motif" evidence="1">
    <location>
        <begin position="34"/>
        <end position="53"/>
    </location>
</feature>
<proteinExistence type="inferred from homology"/>